<comment type="function">
    <text evidence="1">Produces ATP from ADP in the presence of a proton gradient across the membrane.</text>
</comment>
<comment type="subunit">
    <text>F-type ATPases have 2 components, CF(1) - the catalytic core - and CF(0) - the membrane proton channel. CF(1) has five subunits: alpha(3), beta(3), gamma(1), delta(1), epsilon(1). CF(0) has three main subunits: a, b and c.</text>
</comment>
<comment type="subcellular location">
    <subcellularLocation>
        <location evidence="1">Cell inner membrane</location>
        <topology evidence="1">Peripheral membrane protein</topology>
    </subcellularLocation>
</comment>
<comment type="similarity">
    <text evidence="1">Belongs to the ATPase epsilon chain family.</text>
</comment>
<accession>Q30QQ2</accession>
<dbReference type="EMBL" id="CP000153">
    <property type="protein sequence ID" value="ABB44679.1"/>
    <property type="molecule type" value="Genomic_DNA"/>
</dbReference>
<dbReference type="RefSeq" id="WP_011373031.1">
    <property type="nucleotide sequence ID" value="NC_007575.1"/>
</dbReference>
<dbReference type="SMR" id="Q30QQ2"/>
<dbReference type="STRING" id="326298.Suden_1402"/>
<dbReference type="KEGG" id="tdn:Suden_1402"/>
<dbReference type="eggNOG" id="COG0355">
    <property type="taxonomic scope" value="Bacteria"/>
</dbReference>
<dbReference type="HOGENOM" id="CLU_084338_2_1_7"/>
<dbReference type="OrthoDB" id="9799969at2"/>
<dbReference type="Proteomes" id="UP000002714">
    <property type="component" value="Chromosome"/>
</dbReference>
<dbReference type="GO" id="GO:0005886">
    <property type="term" value="C:plasma membrane"/>
    <property type="evidence" value="ECO:0007669"/>
    <property type="project" value="UniProtKB-SubCell"/>
</dbReference>
<dbReference type="GO" id="GO:0045259">
    <property type="term" value="C:proton-transporting ATP synthase complex"/>
    <property type="evidence" value="ECO:0007669"/>
    <property type="project" value="UniProtKB-KW"/>
</dbReference>
<dbReference type="GO" id="GO:0005524">
    <property type="term" value="F:ATP binding"/>
    <property type="evidence" value="ECO:0007669"/>
    <property type="project" value="UniProtKB-UniRule"/>
</dbReference>
<dbReference type="GO" id="GO:0046933">
    <property type="term" value="F:proton-transporting ATP synthase activity, rotational mechanism"/>
    <property type="evidence" value="ECO:0007669"/>
    <property type="project" value="UniProtKB-UniRule"/>
</dbReference>
<dbReference type="CDD" id="cd12152">
    <property type="entry name" value="F1-ATPase_delta"/>
    <property type="match status" value="1"/>
</dbReference>
<dbReference type="Gene3D" id="2.60.15.10">
    <property type="entry name" value="F0F1 ATP synthase delta/epsilon subunit, N-terminal"/>
    <property type="match status" value="1"/>
</dbReference>
<dbReference type="HAMAP" id="MF_00530">
    <property type="entry name" value="ATP_synth_epsil_bac"/>
    <property type="match status" value="1"/>
</dbReference>
<dbReference type="InterPro" id="IPR001469">
    <property type="entry name" value="ATP_synth_F1_dsu/esu"/>
</dbReference>
<dbReference type="InterPro" id="IPR020546">
    <property type="entry name" value="ATP_synth_F1_dsu/esu_N"/>
</dbReference>
<dbReference type="InterPro" id="IPR036771">
    <property type="entry name" value="ATPsynth_dsu/esu_N"/>
</dbReference>
<dbReference type="NCBIfam" id="TIGR01216">
    <property type="entry name" value="ATP_synt_epsi"/>
    <property type="match status" value="1"/>
</dbReference>
<dbReference type="PANTHER" id="PTHR13822">
    <property type="entry name" value="ATP SYNTHASE DELTA/EPSILON CHAIN"/>
    <property type="match status" value="1"/>
</dbReference>
<dbReference type="PANTHER" id="PTHR13822:SF10">
    <property type="entry name" value="ATP SYNTHASE EPSILON CHAIN, CHLOROPLASTIC"/>
    <property type="match status" value="1"/>
</dbReference>
<dbReference type="Pfam" id="PF02823">
    <property type="entry name" value="ATP-synt_DE_N"/>
    <property type="match status" value="1"/>
</dbReference>
<dbReference type="SUPFAM" id="SSF51344">
    <property type="entry name" value="Epsilon subunit of F1F0-ATP synthase N-terminal domain"/>
    <property type="match status" value="1"/>
</dbReference>
<reference key="1">
    <citation type="journal article" date="2008" name="Appl. Environ. Microbiol.">
        <title>Genome of the epsilonproteobacterial chemolithoautotroph Sulfurimonas denitrificans.</title>
        <authorList>
            <person name="Sievert S.M."/>
            <person name="Scott K.M."/>
            <person name="Klotz M.G."/>
            <person name="Chain P.S.G."/>
            <person name="Hauser L.J."/>
            <person name="Hemp J."/>
            <person name="Huegler M."/>
            <person name="Land M."/>
            <person name="Lapidus A."/>
            <person name="Larimer F.W."/>
            <person name="Lucas S."/>
            <person name="Malfatti S.A."/>
            <person name="Meyer F."/>
            <person name="Paulsen I.T."/>
            <person name="Ren Q."/>
            <person name="Simon J."/>
            <person name="Bailey K."/>
            <person name="Diaz E."/>
            <person name="Fitzpatrick K.A."/>
            <person name="Glover B."/>
            <person name="Gwatney N."/>
            <person name="Korajkic A."/>
            <person name="Long A."/>
            <person name="Mobberley J.M."/>
            <person name="Pantry S.N."/>
            <person name="Pazder G."/>
            <person name="Peterson S."/>
            <person name="Quintanilla J.D."/>
            <person name="Sprinkle R."/>
            <person name="Stephens J."/>
            <person name="Thomas P."/>
            <person name="Vaughn R."/>
            <person name="Weber M.J."/>
            <person name="Wooten L.L."/>
        </authorList>
    </citation>
    <scope>NUCLEOTIDE SEQUENCE [LARGE SCALE GENOMIC DNA]</scope>
    <source>
        <strain>ATCC 33889 / DSM 1251</strain>
    </source>
</reference>
<name>ATPE_SULDN</name>
<proteinExistence type="inferred from homology"/>
<feature type="chain" id="PRO_0000265920" description="ATP synthase epsilon chain">
    <location>
        <begin position="1"/>
        <end position="130"/>
    </location>
</feature>
<protein>
    <recommendedName>
        <fullName evidence="1">ATP synthase epsilon chain</fullName>
    </recommendedName>
    <alternativeName>
        <fullName evidence="1">ATP synthase F1 sector epsilon subunit</fullName>
    </alternativeName>
    <alternativeName>
        <fullName evidence="1">F-ATPase epsilon subunit</fullName>
    </alternativeName>
</protein>
<sequence length="130" mass="13780">MSKLKLEILTPNGVIYNGEALSVTLPGEEGEFGVLAEHSSLITLLEAGVIDIEKEDKSVESVLINWGVVEVDEKKVIVLVEGAVAIRGDSESAVAKALNDAKELIESIKDNNPAIATVTARLESAAQNLL</sequence>
<organism>
    <name type="scientific">Sulfurimonas denitrificans (strain ATCC 33889 / DSM 1251)</name>
    <name type="common">Thiomicrospira denitrificans (strain ATCC 33889 / DSM 1251)</name>
    <dbReference type="NCBI Taxonomy" id="326298"/>
    <lineage>
        <taxon>Bacteria</taxon>
        <taxon>Pseudomonadati</taxon>
        <taxon>Campylobacterota</taxon>
        <taxon>Epsilonproteobacteria</taxon>
        <taxon>Campylobacterales</taxon>
        <taxon>Sulfurimonadaceae</taxon>
        <taxon>Sulfurimonas</taxon>
    </lineage>
</organism>
<gene>
    <name evidence="1" type="primary">atpC</name>
    <name type="ordered locus">Suden_1402</name>
</gene>
<evidence type="ECO:0000255" key="1">
    <source>
        <dbReference type="HAMAP-Rule" id="MF_00530"/>
    </source>
</evidence>
<keyword id="KW-0066">ATP synthesis</keyword>
<keyword id="KW-0997">Cell inner membrane</keyword>
<keyword id="KW-1003">Cell membrane</keyword>
<keyword id="KW-0139">CF(1)</keyword>
<keyword id="KW-0375">Hydrogen ion transport</keyword>
<keyword id="KW-0406">Ion transport</keyword>
<keyword id="KW-0472">Membrane</keyword>
<keyword id="KW-1185">Reference proteome</keyword>
<keyword id="KW-0813">Transport</keyword>